<gene>
    <name type="primary">MT-CYB</name>
    <name type="synonym">COB</name>
    <name type="synonym">CYTB</name>
    <name type="synonym">MTCYB</name>
</gene>
<comment type="function">
    <text evidence="2">Component of the ubiquinol-cytochrome c reductase complex (complex III or cytochrome b-c1 complex) that is part of the mitochondrial respiratory chain. The b-c1 complex mediates electron transfer from ubiquinol to cytochrome c. Contributes to the generation of a proton gradient across the mitochondrial membrane that is then used for ATP synthesis.</text>
</comment>
<comment type="cofactor">
    <cofactor evidence="2">
        <name>heme b</name>
        <dbReference type="ChEBI" id="CHEBI:60344"/>
    </cofactor>
    <text evidence="2">Binds 2 heme b groups non-covalently.</text>
</comment>
<comment type="subunit">
    <text evidence="2">The cytochrome bc1 complex contains 11 subunits: 3 respiratory subunits (MT-CYB, CYC1 and UQCRFS1), 2 core proteins (UQCRC1 and UQCRC2) and 6 low-molecular weight proteins (UQCRH/QCR6, UQCRB/QCR7, UQCRQ/QCR8, UQCR10/QCR9, UQCR11/QCR10 and a cleavage product of UQCRFS1). This cytochrome bc1 complex then forms a dimer.</text>
</comment>
<comment type="subcellular location">
    <subcellularLocation>
        <location evidence="2">Mitochondrion inner membrane</location>
        <topology evidence="2">Multi-pass membrane protein</topology>
    </subcellularLocation>
</comment>
<comment type="miscellaneous">
    <text evidence="1">Heme 1 (or BL or b562) is low-potential and absorbs at about 562 nm, and heme 2 (or BH or b566) is high-potential and absorbs at about 566 nm.</text>
</comment>
<comment type="similarity">
    <text evidence="3 4">Belongs to the cytochrome b family.</text>
</comment>
<comment type="caution">
    <text evidence="2">The full-length protein contains only eight transmembrane helices, not nine as predicted by bioinformatics tools.</text>
</comment>
<sequence>MTNIRKTHPLMKIINSSFIDLPAPSNISSWWNFGSLLGICLIIQILTGLFLAMHYTSDTVTAFSSVTHICRDVNYGWLIRYLHANGASMFFICLFLHVGRGLYYGSYMFLETWNIGVLLLFAVMATAFMGYVLPWGQMSFWGATVITNLLSAIPYIGSDLVQWIWGGFSVDKATLTRFFAFHFILPFIIAALAGVHLLFLHETGSNNPSGLSSDADKIPFHPYYTIKDILGVLLLILVLTTLVLFSPDLLGDPDNYTPANPLNTPPHIKPEWYFLFAYAILRSIPNKLGGVLALVLSILVLAFIPFLHTSKQRSMMFRPFSQCLFWILVADLITLTWIGGQPVEHPFIIIGQLASILYFFLILVLMPITSLLENNLLKW</sequence>
<geneLocation type="mitochondrion"/>
<evidence type="ECO:0000250" key="1"/>
<evidence type="ECO:0000250" key="2">
    <source>
        <dbReference type="UniProtKB" id="P00157"/>
    </source>
</evidence>
<evidence type="ECO:0000255" key="3">
    <source>
        <dbReference type="PROSITE-ProRule" id="PRU00967"/>
    </source>
</evidence>
<evidence type="ECO:0000255" key="4">
    <source>
        <dbReference type="PROSITE-ProRule" id="PRU00968"/>
    </source>
</evidence>
<protein>
    <recommendedName>
        <fullName>Cytochrome b</fullName>
    </recommendedName>
    <alternativeName>
        <fullName>Complex III subunit 3</fullName>
    </alternativeName>
    <alternativeName>
        <fullName>Complex III subunit III</fullName>
    </alternativeName>
    <alternativeName>
        <fullName>Cytochrome b-c1 complex subunit 3</fullName>
    </alternativeName>
    <alternativeName>
        <fullName>Ubiquinol-cytochrome-c reductase complex cytochrome b subunit</fullName>
    </alternativeName>
</protein>
<name>CYB_SORNI</name>
<keyword id="KW-0249">Electron transport</keyword>
<keyword id="KW-0349">Heme</keyword>
<keyword id="KW-0408">Iron</keyword>
<keyword id="KW-0472">Membrane</keyword>
<keyword id="KW-0479">Metal-binding</keyword>
<keyword id="KW-0496">Mitochondrion</keyword>
<keyword id="KW-0999">Mitochondrion inner membrane</keyword>
<keyword id="KW-0679">Respiratory chain</keyword>
<keyword id="KW-0812">Transmembrane</keyword>
<keyword id="KW-1133">Transmembrane helix</keyword>
<keyword id="KW-0813">Transport</keyword>
<keyword id="KW-0830">Ubiquinone</keyword>
<reference key="1">
    <citation type="submission" date="2004-03" db="EMBL/GenBank/DDBJ databases">
        <title>Molecular phylogenetics of the Soricidae (Insectivora, Mammalia) based on mitochondrial cytochrome b gene sequences.</title>
        <authorList>
            <person name="Ohdachi S.D."/>
            <person name="Iwasa M.A."/>
            <person name="Abe H."/>
            <person name="Vogel P."/>
            <person name="Oshida T."/>
            <person name="Lin L.K."/>
            <person name="Hasegawa M."/>
        </authorList>
    </citation>
    <scope>NUCLEOTIDE SEQUENCE [GENOMIC DNA]</scope>
    <source>
        <tissue>Foot</tissue>
    </source>
</reference>
<accession>Q1XIN0</accession>
<dbReference type="EMBL" id="AB175101">
    <property type="protein sequence ID" value="BAE92666.1"/>
    <property type="molecule type" value="Genomic_DNA"/>
</dbReference>
<dbReference type="SMR" id="Q1XIN0"/>
<dbReference type="GO" id="GO:0005743">
    <property type="term" value="C:mitochondrial inner membrane"/>
    <property type="evidence" value="ECO:0007669"/>
    <property type="project" value="UniProtKB-SubCell"/>
</dbReference>
<dbReference type="GO" id="GO:0045275">
    <property type="term" value="C:respiratory chain complex III"/>
    <property type="evidence" value="ECO:0007669"/>
    <property type="project" value="InterPro"/>
</dbReference>
<dbReference type="GO" id="GO:0046872">
    <property type="term" value="F:metal ion binding"/>
    <property type="evidence" value="ECO:0007669"/>
    <property type="project" value="UniProtKB-KW"/>
</dbReference>
<dbReference type="GO" id="GO:0008121">
    <property type="term" value="F:ubiquinol-cytochrome-c reductase activity"/>
    <property type="evidence" value="ECO:0007669"/>
    <property type="project" value="InterPro"/>
</dbReference>
<dbReference type="GO" id="GO:0006122">
    <property type="term" value="P:mitochondrial electron transport, ubiquinol to cytochrome c"/>
    <property type="evidence" value="ECO:0007669"/>
    <property type="project" value="TreeGrafter"/>
</dbReference>
<dbReference type="CDD" id="cd00290">
    <property type="entry name" value="cytochrome_b_C"/>
    <property type="match status" value="1"/>
</dbReference>
<dbReference type="CDD" id="cd00284">
    <property type="entry name" value="Cytochrome_b_N"/>
    <property type="match status" value="1"/>
</dbReference>
<dbReference type="FunFam" id="1.20.810.10:FF:000002">
    <property type="entry name" value="Cytochrome b"/>
    <property type="match status" value="1"/>
</dbReference>
<dbReference type="Gene3D" id="1.20.810.10">
    <property type="entry name" value="Cytochrome Bc1 Complex, Chain C"/>
    <property type="match status" value="1"/>
</dbReference>
<dbReference type="InterPro" id="IPR005798">
    <property type="entry name" value="Cyt_b/b6_C"/>
</dbReference>
<dbReference type="InterPro" id="IPR036150">
    <property type="entry name" value="Cyt_b/b6_C_sf"/>
</dbReference>
<dbReference type="InterPro" id="IPR005797">
    <property type="entry name" value="Cyt_b/b6_N"/>
</dbReference>
<dbReference type="InterPro" id="IPR027387">
    <property type="entry name" value="Cytb/b6-like_sf"/>
</dbReference>
<dbReference type="InterPro" id="IPR030689">
    <property type="entry name" value="Cytochrome_b"/>
</dbReference>
<dbReference type="InterPro" id="IPR048260">
    <property type="entry name" value="Cytochrome_b_C_euk/bac"/>
</dbReference>
<dbReference type="InterPro" id="IPR048259">
    <property type="entry name" value="Cytochrome_b_N_euk/bac"/>
</dbReference>
<dbReference type="InterPro" id="IPR016174">
    <property type="entry name" value="Di-haem_cyt_TM"/>
</dbReference>
<dbReference type="PANTHER" id="PTHR19271">
    <property type="entry name" value="CYTOCHROME B"/>
    <property type="match status" value="1"/>
</dbReference>
<dbReference type="PANTHER" id="PTHR19271:SF16">
    <property type="entry name" value="CYTOCHROME B"/>
    <property type="match status" value="1"/>
</dbReference>
<dbReference type="Pfam" id="PF00032">
    <property type="entry name" value="Cytochrom_B_C"/>
    <property type="match status" value="1"/>
</dbReference>
<dbReference type="Pfam" id="PF00033">
    <property type="entry name" value="Cytochrome_B"/>
    <property type="match status" value="1"/>
</dbReference>
<dbReference type="PIRSF" id="PIRSF038885">
    <property type="entry name" value="COB"/>
    <property type="match status" value="1"/>
</dbReference>
<dbReference type="SUPFAM" id="SSF81648">
    <property type="entry name" value="a domain/subunit of cytochrome bc1 complex (Ubiquinol-cytochrome c reductase)"/>
    <property type="match status" value="1"/>
</dbReference>
<dbReference type="SUPFAM" id="SSF81342">
    <property type="entry name" value="Transmembrane di-heme cytochromes"/>
    <property type="match status" value="1"/>
</dbReference>
<dbReference type="PROSITE" id="PS51003">
    <property type="entry name" value="CYTB_CTER"/>
    <property type="match status" value="1"/>
</dbReference>
<dbReference type="PROSITE" id="PS51002">
    <property type="entry name" value="CYTB_NTER"/>
    <property type="match status" value="1"/>
</dbReference>
<organism>
    <name type="scientific">Soriculus nigrescens</name>
    <name type="common">Himalayan shrew</name>
    <dbReference type="NCBI Taxonomy" id="62296"/>
    <lineage>
        <taxon>Eukaryota</taxon>
        <taxon>Metazoa</taxon>
        <taxon>Chordata</taxon>
        <taxon>Craniata</taxon>
        <taxon>Vertebrata</taxon>
        <taxon>Euteleostomi</taxon>
        <taxon>Mammalia</taxon>
        <taxon>Eutheria</taxon>
        <taxon>Laurasiatheria</taxon>
        <taxon>Eulipotyphla</taxon>
        <taxon>Soricidae</taxon>
        <taxon>Soricinae</taxon>
        <taxon>Soriculus</taxon>
    </lineage>
</organism>
<proteinExistence type="inferred from homology"/>
<feature type="chain" id="PRO_0000254760" description="Cytochrome b">
    <location>
        <begin position="1"/>
        <end position="379"/>
    </location>
</feature>
<feature type="transmembrane region" description="Helical" evidence="2">
    <location>
        <begin position="33"/>
        <end position="53"/>
    </location>
</feature>
<feature type="transmembrane region" description="Helical" evidence="2">
    <location>
        <begin position="77"/>
        <end position="98"/>
    </location>
</feature>
<feature type="transmembrane region" description="Helical" evidence="2">
    <location>
        <begin position="113"/>
        <end position="133"/>
    </location>
</feature>
<feature type="transmembrane region" description="Helical" evidence="2">
    <location>
        <begin position="178"/>
        <end position="198"/>
    </location>
</feature>
<feature type="transmembrane region" description="Helical" evidence="2">
    <location>
        <begin position="226"/>
        <end position="246"/>
    </location>
</feature>
<feature type="transmembrane region" description="Helical" evidence="2">
    <location>
        <begin position="288"/>
        <end position="308"/>
    </location>
</feature>
<feature type="transmembrane region" description="Helical" evidence="2">
    <location>
        <begin position="320"/>
        <end position="340"/>
    </location>
</feature>
<feature type="transmembrane region" description="Helical" evidence="2">
    <location>
        <begin position="347"/>
        <end position="367"/>
    </location>
</feature>
<feature type="binding site" description="axial binding residue" evidence="2">
    <location>
        <position position="83"/>
    </location>
    <ligand>
        <name>heme b</name>
        <dbReference type="ChEBI" id="CHEBI:60344"/>
        <label>b562</label>
    </ligand>
    <ligandPart>
        <name>Fe</name>
        <dbReference type="ChEBI" id="CHEBI:18248"/>
    </ligandPart>
</feature>
<feature type="binding site" description="axial binding residue" evidence="2">
    <location>
        <position position="97"/>
    </location>
    <ligand>
        <name>heme b</name>
        <dbReference type="ChEBI" id="CHEBI:60344"/>
        <label>b566</label>
    </ligand>
    <ligandPart>
        <name>Fe</name>
        <dbReference type="ChEBI" id="CHEBI:18248"/>
    </ligandPart>
</feature>
<feature type="binding site" description="axial binding residue" evidence="2">
    <location>
        <position position="182"/>
    </location>
    <ligand>
        <name>heme b</name>
        <dbReference type="ChEBI" id="CHEBI:60344"/>
        <label>b562</label>
    </ligand>
    <ligandPart>
        <name>Fe</name>
        <dbReference type="ChEBI" id="CHEBI:18248"/>
    </ligandPart>
</feature>
<feature type="binding site" description="axial binding residue" evidence="2">
    <location>
        <position position="196"/>
    </location>
    <ligand>
        <name>heme b</name>
        <dbReference type="ChEBI" id="CHEBI:60344"/>
        <label>b566</label>
    </ligand>
    <ligandPart>
        <name>Fe</name>
        <dbReference type="ChEBI" id="CHEBI:18248"/>
    </ligandPart>
</feature>
<feature type="binding site" evidence="2">
    <location>
        <position position="201"/>
    </location>
    <ligand>
        <name>a ubiquinone</name>
        <dbReference type="ChEBI" id="CHEBI:16389"/>
    </ligand>
</feature>